<proteinExistence type="inferred from homology"/>
<reference key="1">
    <citation type="journal article" date="2007" name="J. Bacteriol.">
        <title>The complete genome sequence of Campylobacter jejuni strain 81116 (NCTC11828).</title>
        <authorList>
            <person name="Pearson B.M."/>
            <person name="Gaskin D.J.H."/>
            <person name="Segers R.P.A.M."/>
            <person name="Wells J.M."/>
            <person name="Nuijten P.J.M."/>
            <person name="van Vliet A.H.M."/>
        </authorList>
    </citation>
    <scope>NUCLEOTIDE SEQUENCE [LARGE SCALE GENOMIC DNA]</scope>
    <source>
        <strain>81116 / NCTC 11828</strain>
    </source>
</reference>
<keyword id="KW-0963">Cytoplasm</keyword>
<keyword id="KW-0255">Endonuclease</keyword>
<keyword id="KW-0378">Hydrolase</keyword>
<keyword id="KW-0464">Manganese</keyword>
<keyword id="KW-0479">Metal-binding</keyword>
<keyword id="KW-0540">Nuclease</keyword>
<dbReference type="EC" id="3.1.26.4" evidence="1"/>
<dbReference type="EMBL" id="CP000814">
    <property type="protein sequence ID" value="ABV51610.1"/>
    <property type="molecule type" value="Genomic_DNA"/>
</dbReference>
<dbReference type="RefSeq" id="WP_002866799.1">
    <property type="nucleotide sequence ID" value="NC_009839.1"/>
</dbReference>
<dbReference type="SMR" id="A8FJH3"/>
<dbReference type="KEGG" id="cju:C8J_0009"/>
<dbReference type="HOGENOM" id="CLU_036532_3_1_7"/>
<dbReference type="GO" id="GO:0005737">
    <property type="term" value="C:cytoplasm"/>
    <property type="evidence" value="ECO:0007669"/>
    <property type="project" value="UniProtKB-SubCell"/>
</dbReference>
<dbReference type="GO" id="GO:0032299">
    <property type="term" value="C:ribonuclease H2 complex"/>
    <property type="evidence" value="ECO:0007669"/>
    <property type="project" value="TreeGrafter"/>
</dbReference>
<dbReference type="GO" id="GO:0030145">
    <property type="term" value="F:manganese ion binding"/>
    <property type="evidence" value="ECO:0007669"/>
    <property type="project" value="UniProtKB-UniRule"/>
</dbReference>
<dbReference type="GO" id="GO:0003723">
    <property type="term" value="F:RNA binding"/>
    <property type="evidence" value="ECO:0007669"/>
    <property type="project" value="InterPro"/>
</dbReference>
<dbReference type="GO" id="GO:0004523">
    <property type="term" value="F:RNA-DNA hybrid ribonuclease activity"/>
    <property type="evidence" value="ECO:0007669"/>
    <property type="project" value="UniProtKB-UniRule"/>
</dbReference>
<dbReference type="GO" id="GO:0043137">
    <property type="term" value="P:DNA replication, removal of RNA primer"/>
    <property type="evidence" value="ECO:0007669"/>
    <property type="project" value="TreeGrafter"/>
</dbReference>
<dbReference type="GO" id="GO:0006298">
    <property type="term" value="P:mismatch repair"/>
    <property type="evidence" value="ECO:0007669"/>
    <property type="project" value="TreeGrafter"/>
</dbReference>
<dbReference type="CDD" id="cd07182">
    <property type="entry name" value="RNase_HII_bacteria_HII_like"/>
    <property type="match status" value="1"/>
</dbReference>
<dbReference type="Gene3D" id="3.30.420.10">
    <property type="entry name" value="Ribonuclease H-like superfamily/Ribonuclease H"/>
    <property type="match status" value="1"/>
</dbReference>
<dbReference type="HAMAP" id="MF_00052_B">
    <property type="entry name" value="RNase_HII_B"/>
    <property type="match status" value="1"/>
</dbReference>
<dbReference type="InterPro" id="IPR022898">
    <property type="entry name" value="RNase_HII"/>
</dbReference>
<dbReference type="InterPro" id="IPR001352">
    <property type="entry name" value="RNase_HII/HIII"/>
</dbReference>
<dbReference type="InterPro" id="IPR024567">
    <property type="entry name" value="RNase_HII/HIII_dom"/>
</dbReference>
<dbReference type="InterPro" id="IPR012337">
    <property type="entry name" value="RNaseH-like_sf"/>
</dbReference>
<dbReference type="InterPro" id="IPR036397">
    <property type="entry name" value="RNaseH_sf"/>
</dbReference>
<dbReference type="NCBIfam" id="NF000595">
    <property type="entry name" value="PRK00015.1-3"/>
    <property type="match status" value="1"/>
</dbReference>
<dbReference type="PANTHER" id="PTHR10954">
    <property type="entry name" value="RIBONUCLEASE H2 SUBUNIT A"/>
    <property type="match status" value="1"/>
</dbReference>
<dbReference type="PANTHER" id="PTHR10954:SF18">
    <property type="entry name" value="RIBONUCLEASE HII"/>
    <property type="match status" value="1"/>
</dbReference>
<dbReference type="Pfam" id="PF01351">
    <property type="entry name" value="RNase_HII"/>
    <property type="match status" value="1"/>
</dbReference>
<dbReference type="SUPFAM" id="SSF53098">
    <property type="entry name" value="Ribonuclease H-like"/>
    <property type="match status" value="1"/>
</dbReference>
<dbReference type="PROSITE" id="PS51975">
    <property type="entry name" value="RNASE_H_2"/>
    <property type="match status" value="1"/>
</dbReference>
<gene>
    <name evidence="1" type="primary">rnhB</name>
    <name type="ordered locus">C8J_0009</name>
</gene>
<accession>A8FJH3</accession>
<evidence type="ECO:0000255" key="1">
    <source>
        <dbReference type="HAMAP-Rule" id="MF_00052"/>
    </source>
</evidence>
<evidence type="ECO:0000255" key="2">
    <source>
        <dbReference type="PROSITE-ProRule" id="PRU01319"/>
    </source>
</evidence>
<protein>
    <recommendedName>
        <fullName evidence="1">Ribonuclease HII</fullName>
        <shortName evidence="1">RNase HII</shortName>
        <ecNumber evidence="1">3.1.26.4</ecNumber>
    </recommendedName>
</protein>
<feature type="chain" id="PRO_1000071136" description="Ribonuclease HII">
    <location>
        <begin position="1"/>
        <end position="191"/>
    </location>
</feature>
<feature type="domain" description="RNase H type-2" evidence="2">
    <location>
        <begin position="16"/>
        <end position="191"/>
    </location>
</feature>
<feature type="binding site" evidence="1">
    <location>
        <position position="22"/>
    </location>
    <ligand>
        <name>a divalent metal cation</name>
        <dbReference type="ChEBI" id="CHEBI:60240"/>
    </ligand>
</feature>
<feature type="binding site" evidence="1">
    <location>
        <position position="23"/>
    </location>
    <ligand>
        <name>a divalent metal cation</name>
        <dbReference type="ChEBI" id="CHEBI:60240"/>
    </ligand>
</feature>
<feature type="binding site" evidence="1">
    <location>
        <position position="110"/>
    </location>
    <ligand>
        <name>a divalent metal cation</name>
        <dbReference type="ChEBI" id="CHEBI:60240"/>
    </ligand>
</feature>
<comment type="function">
    <text evidence="1">Endonuclease that specifically degrades the RNA of RNA-DNA hybrids.</text>
</comment>
<comment type="catalytic activity">
    <reaction evidence="1">
        <text>Endonucleolytic cleavage to 5'-phosphomonoester.</text>
        <dbReference type="EC" id="3.1.26.4"/>
    </reaction>
</comment>
<comment type="cofactor">
    <cofactor evidence="1">
        <name>Mn(2+)</name>
        <dbReference type="ChEBI" id="CHEBI:29035"/>
    </cofactor>
    <cofactor evidence="1">
        <name>Mg(2+)</name>
        <dbReference type="ChEBI" id="CHEBI:18420"/>
    </cofactor>
    <text evidence="1">Manganese or magnesium. Binds 1 divalent metal ion per monomer in the absence of substrate. May bind a second metal ion after substrate binding.</text>
</comment>
<comment type="subcellular location">
    <subcellularLocation>
        <location evidence="1">Cytoplasm</location>
    </subcellularLocation>
</comment>
<comment type="similarity">
    <text evidence="1">Belongs to the RNase HII family.</text>
</comment>
<organism>
    <name type="scientific">Campylobacter jejuni subsp. jejuni serotype O:6 (strain 81116 / NCTC 11828)</name>
    <dbReference type="NCBI Taxonomy" id="407148"/>
    <lineage>
        <taxon>Bacteria</taxon>
        <taxon>Pseudomonadati</taxon>
        <taxon>Campylobacterota</taxon>
        <taxon>Epsilonproteobacteria</taxon>
        <taxon>Campylobacterales</taxon>
        <taxon>Campylobacteraceae</taxon>
        <taxon>Campylobacter</taxon>
    </lineage>
</organism>
<name>RNH2_CAMJ8</name>
<sequence length="191" mass="21389">MKTLFDTKELLNEFDINLIGIDEAGRGALAGPMMMAACKLNKKLDGLCDSKKLSEKKREELYEIIIKNSNYLILAFSSEQIDALGLSTCLKTGLKLIKKHFKTENNFLYDGNTNLGINGIKTQIKADASILQVSAASILAKVSKDRVMNFLAKDFPCYEFEKNKAYGTKAHKELIAKFGICKLHRKSFKLL</sequence>